<dbReference type="EC" id="1.17.1.8" evidence="1"/>
<dbReference type="EMBL" id="AL591688">
    <property type="protein sequence ID" value="CAC41548.1"/>
    <property type="molecule type" value="Genomic_DNA"/>
</dbReference>
<dbReference type="RefSeq" id="NP_384267.1">
    <property type="nucleotide sequence ID" value="NC_003047.1"/>
</dbReference>
<dbReference type="RefSeq" id="WP_010968395.1">
    <property type="nucleotide sequence ID" value="NC_003047.1"/>
</dbReference>
<dbReference type="SMR" id="P58326"/>
<dbReference type="EnsemblBacteria" id="CAC41548">
    <property type="protein sequence ID" value="CAC41548"/>
    <property type="gene ID" value="SMc02837"/>
</dbReference>
<dbReference type="GeneID" id="89574485"/>
<dbReference type="KEGG" id="sme:SMc02837"/>
<dbReference type="PATRIC" id="fig|266834.11.peg.1522"/>
<dbReference type="eggNOG" id="COG0289">
    <property type="taxonomic scope" value="Bacteria"/>
</dbReference>
<dbReference type="HOGENOM" id="CLU_047479_2_1_5"/>
<dbReference type="OrthoDB" id="9790352at2"/>
<dbReference type="UniPathway" id="UPA00034">
    <property type="reaction ID" value="UER00018"/>
</dbReference>
<dbReference type="Proteomes" id="UP000001976">
    <property type="component" value="Chromosome"/>
</dbReference>
<dbReference type="GO" id="GO:0005829">
    <property type="term" value="C:cytosol"/>
    <property type="evidence" value="ECO:0007669"/>
    <property type="project" value="TreeGrafter"/>
</dbReference>
<dbReference type="GO" id="GO:0008839">
    <property type="term" value="F:4-hydroxy-tetrahydrodipicolinate reductase"/>
    <property type="evidence" value="ECO:0007669"/>
    <property type="project" value="UniProtKB-EC"/>
</dbReference>
<dbReference type="GO" id="GO:0051287">
    <property type="term" value="F:NAD binding"/>
    <property type="evidence" value="ECO:0007669"/>
    <property type="project" value="UniProtKB-UniRule"/>
</dbReference>
<dbReference type="GO" id="GO:0050661">
    <property type="term" value="F:NADP binding"/>
    <property type="evidence" value="ECO:0007669"/>
    <property type="project" value="UniProtKB-UniRule"/>
</dbReference>
<dbReference type="GO" id="GO:0016726">
    <property type="term" value="F:oxidoreductase activity, acting on CH or CH2 groups, NAD or NADP as acceptor"/>
    <property type="evidence" value="ECO:0007669"/>
    <property type="project" value="UniProtKB-UniRule"/>
</dbReference>
<dbReference type="GO" id="GO:0019877">
    <property type="term" value="P:diaminopimelate biosynthetic process"/>
    <property type="evidence" value="ECO:0007669"/>
    <property type="project" value="UniProtKB-UniRule"/>
</dbReference>
<dbReference type="GO" id="GO:0009089">
    <property type="term" value="P:lysine biosynthetic process via diaminopimelate"/>
    <property type="evidence" value="ECO:0007669"/>
    <property type="project" value="UniProtKB-UniRule"/>
</dbReference>
<dbReference type="CDD" id="cd02274">
    <property type="entry name" value="DHDPR_N"/>
    <property type="match status" value="1"/>
</dbReference>
<dbReference type="FunFam" id="3.30.360.10:FF:000004">
    <property type="entry name" value="4-hydroxy-tetrahydrodipicolinate reductase"/>
    <property type="match status" value="1"/>
</dbReference>
<dbReference type="Gene3D" id="3.30.360.10">
    <property type="entry name" value="Dihydrodipicolinate Reductase, domain 2"/>
    <property type="match status" value="1"/>
</dbReference>
<dbReference type="Gene3D" id="3.40.50.720">
    <property type="entry name" value="NAD(P)-binding Rossmann-like Domain"/>
    <property type="match status" value="1"/>
</dbReference>
<dbReference type="HAMAP" id="MF_00102">
    <property type="entry name" value="DapB"/>
    <property type="match status" value="1"/>
</dbReference>
<dbReference type="InterPro" id="IPR022663">
    <property type="entry name" value="DapB_C"/>
</dbReference>
<dbReference type="InterPro" id="IPR000846">
    <property type="entry name" value="DapB_N"/>
</dbReference>
<dbReference type="InterPro" id="IPR022664">
    <property type="entry name" value="DapB_N_CS"/>
</dbReference>
<dbReference type="InterPro" id="IPR023940">
    <property type="entry name" value="DHDPR_bac"/>
</dbReference>
<dbReference type="InterPro" id="IPR036291">
    <property type="entry name" value="NAD(P)-bd_dom_sf"/>
</dbReference>
<dbReference type="NCBIfam" id="TIGR00036">
    <property type="entry name" value="dapB"/>
    <property type="match status" value="1"/>
</dbReference>
<dbReference type="PANTHER" id="PTHR20836:SF0">
    <property type="entry name" value="4-HYDROXY-TETRAHYDRODIPICOLINATE REDUCTASE 1, CHLOROPLASTIC-RELATED"/>
    <property type="match status" value="1"/>
</dbReference>
<dbReference type="PANTHER" id="PTHR20836">
    <property type="entry name" value="DIHYDRODIPICOLINATE REDUCTASE"/>
    <property type="match status" value="1"/>
</dbReference>
<dbReference type="Pfam" id="PF05173">
    <property type="entry name" value="DapB_C"/>
    <property type="match status" value="1"/>
</dbReference>
<dbReference type="Pfam" id="PF01113">
    <property type="entry name" value="DapB_N"/>
    <property type="match status" value="1"/>
</dbReference>
<dbReference type="PIRSF" id="PIRSF000161">
    <property type="entry name" value="DHPR"/>
    <property type="match status" value="1"/>
</dbReference>
<dbReference type="SUPFAM" id="SSF55347">
    <property type="entry name" value="Glyceraldehyde-3-phosphate dehydrogenase-like, C-terminal domain"/>
    <property type="match status" value="1"/>
</dbReference>
<dbReference type="SUPFAM" id="SSF51735">
    <property type="entry name" value="NAD(P)-binding Rossmann-fold domains"/>
    <property type="match status" value="1"/>
</dbReference>
<dbReference type="PROSITE" id="PS01298">
    <property type="entry name" value="DAPB"/>
    <property type="match status" value="1"/>
</dbReference>
<reference key="1">
    <citation type="journal article" date="2001" name="Proc. Natl. Acad. Sci. U.S.A.">
        <title>Analysis of the chromosome sequence of the legume symbiont Sinorhizobium meliloti strain 1021.</title>
        <authorList>
            <person name="Capela D."/>
            <person name="Barloy-Hubler F."/>
            <person name="Gouzy J."/>
            <person name="Bothe G."/>
            <person name="Ampe F."/>
            <person name="Batut J."/>
            <person name="Boistard P."/>
            <person name="Becker A."/>
            <person name="Boutry M."/>
            <person name="Cadieu E."/>
            <person name="Dreano S."/>
            <person name="Gloux S."/>
            <person name="Godrie T."/>
            <person name="Goffeau A."/>
            <person name="Kahn D."/>
            <person name="Kiss E."/>
            <person name="Lelaure V."/>
            <person name="Masuy D."/>
            <person name="Pohl T."/>
            <person name="Portetelle D."/>
            <person name="Puehler A."/>
            <person name="Purnelle B."/>
            <person name="Ramsperger U."/>
            <person name="Renard C."/>
            <person name="Thebault P."/>
            <person name="Vandenbol M."/>
            <person name="Weidner S."/>
            <person name="Galibert F."/>
        </authorList>
    </citation>
    <scope>NUCLEOTIDE SEQUENCE [LARGE SCALE GENOMIC DNA]</scope>
    <source>
        <strain>1021</strain>
    </source>
</reference>
<reference key="2">
    <citation type="journal article" date="2001" name="Science">
        <title>The composite genome of the legume symbiont Sinorhizobium meliloti.</title>
        <authorList>
            <person name="Galibert F."/>
            <person name="Finan T.M."/>
            <person name="Long S.R."/>
            <person name="Puehler A."/>
            <person name="Abola P."/>
            <person name="Ampe F."/>
            <person name="Barloy-Hubler F."/>
            <person name="Barnett M.J."/>
            <person name="Becker A."/>
            <person name="Boistard P."/>
            <person name="Bothe G."/>
            <person name="Boutry M."/>
            <person name="Bowser L."/>
            <person name="Buhrmester J."/>
            <person name="Cadieu E."/>
            <person name="Capela D."/>
            <person name="Chain P."/>
            <person name="Cowie A."/>
            <person name="Davis R.W."/>
            <person name="Dreano S."/>
            <person name="Federspiel N.A."/>
            <person name="Fisher R.F."/>
            <person name="Gloux S."/>
            <person name="Godrie T."/>
            <person name="Goffeau A."/>
            <person name="Golding B."/>
            <person name="Gouzy J."/>
            <person name="Gurjal M."/>
            <person name="Hernandez-Lucas I."/>
            <person name="Hong A."/>
            <person name="Huizar L."/>
            <person name="Hyman R.W."/>
            <person name="Jones T."/>
            <person name="Kahn D."/>
            <person name="Kahn M.L."/>
            <person name="Kalman S."/>
            <person name="Keating D.H."/>
            <person name="Kiss E."/>
            <person name="Komp C."/>
            <person name="Lelaure V."/>
            <person name="Masuy D."/>
            <person name="Palm C."/>
            <person name="Peck M.C."/>
            <person name="Pohl T.M."/>
            <person name="Portetelle D."/>
            <person name="Purnelle B."/>
            <person name="Ramsperger U."/>
            <person name="Surzycki R."/>
            <person name="Thebault P."/>
            <person name="Vandenbol M."/>
            <person name="Vorhoelter F.J."/>
            <person name="Weidner S."/>
            <person name="Wells D.H."/>
            <person name="Wong K."/>
            <person name="Yeh K.-C."/>
            <person name="Batut J."/>
        </authorList>
    </citation>
    <scope>NUCLEOTIDE SEQUENCE [LARGE SCALE GENOMIC DNA]</scope>
    <source>
        <strain>1021</strain>
    </source>
</reference>
<evidence type="ECO:0000255" key="1">
    <source>
        <dbReference type="HAMAP-Rule" id="MF_00102"/>
    </source>
</evidence>
<evidence type="ECO:0000305" key="2"/>
<gene>
    <name evidence="1" type="primary">dapB</name>
    <name type="ordered locus">R00161</name>
    <name type="ORF">SMc02837</name>
</gene>
<feature type="chain" id="PRO_0000141476" description="4-hydroxy-tetrahydrodipicolinate reductase">
    <location>
        <begin position="1"/>
        <end position="272"/>
    </location>
</feature>
<feature type="active site" description="Proton donor/acceptor" evidence="1">
    <location>
        <position position="160"/>
    </location>
</feature>
<feature type="active site" description="Proton donor" evidence="1">
    <location>
        <position position="164"/>
    </location>
</feature>
<feature type="binding site" evidence="1">
    <location>
        <begin position="12"/>
        <end position="17"/>
    </location>
    <ligand>
        <name>NAD(+)</name>
        <dbReference type="ChEBI" id="CHEBI:57540"/>
    </ligand>
</feature>
<feature type="binding site" evidence="1">
    <location>
        <position position="38"/>
    </location>
    <ligand>
        <name>NAD(+)</name>
        <dbReference type="ChEBI" id="CHEBI:57540"/>
    </ligand>
</feature>
<feature type="binding site" evidence="1">
    <location>
        <position position="39"/>
    </location>
    <ligand>
        <name>NADP(+)</name>
        <dbReference type="ChEBI" id="CHEBI:58349"/>
    </ligand>
</feature>
<feature type="binding site" evidence="1">
    <location>
        <begin position="102"/>
        <end position="104"/>
    </location>
    <ligand>
        <name>NAD(+)</name>
        <dbReference type="ChEBI" id="CHEBI:57540"/>
    </ligand>
</feature>
<feature type="binding site" evidence="1">
    <location>
        <begin position="126"/>
        <end position="129"/>
    </location>
    <ligand>
        <name>NAD(+)</name>
        <dbReference type="ChEBI" id="CHEBI:57540"/>
    </ligand>
</feature>
<feature type="binding site" evidence="1">
    <location>
        <position position="161"/>
    </location>
    <ligand>
        <name>(S)-2,3,4,5-tetrahydrodipicolinate</name>
        <dbReference type="ChEBI" id="CHEBI:16845"/>
    </ligand>
</feature>
<feature type="binding site" evidence="1">
    <location>
        <begin position="170"/>
        <end position="171"/>
    </location>
    <ligand>
        <name>(S)-2,3,4,5-tetrahydrodipicolinate</name>
        <dbReference type="ChEBI" id="CHEBI:16845"/>
    </ligand>
</feature>
<accession>P58326</accession>
<name>DAPB_RHIME</name>
<protein>
    <recommendedName>
        <fullName evidence="1">4-hydroxy-tetrahydrodipicolinate reductase</fullName>
        <shortName evidence="1">HTPA reductase</shortName>
        <ecNumber evidence="1">1.17.1.8</ecNumber>
    </recommendedName>
</protein>
<keyword id="KW-0028">Amino-acid biosynthesis</keyword>
<keyword id="KW-0963">Cytoplasm</keyword>
<keyword id="KW-0220">Diaminopimelate biosynthesis</keyword>
<keyword id="KW-0457">Lysine biosynthesis</keyword>
<keyword id="KW-0520">NAD</keyword>
<keyword id="KW-0521">NADP</keyword>
<keyword id="KW-0560">Oxidoreductase</keyword>
<keyword id="KW-1185">Reference proteome</keyword>
<comment type="function">
    <text evidence="1">Catalyzes the conversion of 4-hydroxy-tetrahydrodipicolinate (HTPA) to tetrahydrodipicolinate.</text>
</comment>
<comment type="catalytic activity">
    <reaction evidence="1">
        <text>(S)-2,3,4,5-tetrahydrodipicolinate + NAD(+) + H2O = (2S,4S)-4-hydroxy-2,3,4,5-tetrahydrodipicolinate + NADH + H(+)</text>
        <dbReference type="Rhea" id="RHEA:35323"/>
        <dbReference type="ChEBI" id="CHEBI:15377"/>
        <dbReference type="ChEBI" id="CHEBI:15378"/>
        <dbReference type="ChEBI" id="CHEBI:16845"/>
        <dbReference type="ChEBI" id="CHEBI:57540"/>
        <dbReference type="ChEBI" id="CHEBI:57945"/>
        <dbReference type="ChEBI" id="CHEBI:67139"/>
        <dbReference type="EC" id="1.17.1.8"/>
    </reaction>
</comment>
<comment type="catalytic activity">
    <reaction evidence="1">
        <text>(S)-2,3,4,5-tetrahydrodipicolinate + NADP(+) + H2O = (2S,4S)-4-hydroxy-2,3,4,5-tetrahydrodipicolinate + NADPH + H(+)</text>
        <dbReference type="Rhea" id="RHEA:35331"/>
        <dbReference type="ChEBI" id="CHEBI:15377"/>
        <dbReference type="ChEBI" id="CHEBI:15378"/>
        <dbReference type="ChEBI" id="CHEBI:16845"/>
        <dbReference type="ChEBI" id="CHEBI:57783"/>
        <dbReference type="ChEBI" id="CHEBI:58349"/>
        <dbReference type="ChEBI" id="CHEBI:67139"/>
        <dbReference type="EC" id="1.17.1.8"/>
    </reaction>
</comment>
<comment type="pathway">
    <text evidence="1">Amino-acid biosynthesis; L-lysine biosynthesis via DAP pathway; (S)-tetrahydrodipicolinate from L-aspartate: step 4/4.</text>
</comment>
<comment type="subcellular location">
    <subcellularLocation>
        <location evidence="1">Cytoplasm</location>
    </subcellularLocation>
</comment>
<comment type="similarity">
    <text evidence="1">Belongs to the DapB family.</text>
</comment>
<comment type="caution">
    <text evidence="2">Was originally thought to be a dihydrodipicolinate reductase (DHDPR), catalyzing the conversion of dihydrodipicolinate to tetrahydrodipicolinate. However, it was shown in E.coli that the substrate of the enzymatic reaction is not dihydrodipicolinate (DHDP) but in fact (2S,4S)-4-hydroxy-2,3,4,5-tetrahydrodipicolinic acid (HTPA), the product released by the DapA-catalyzed reaction.</text>
</comment>
<organism>
    <name type="scientific">Rhizobium meliloti (strain 1021)</name>
    <name type="common">Ensifer meliloti</name>
    <name type="synonym">Sinorhizobium meliloti</name>
    <dbReference type="NCBI Taxonomy" id="266834"/>
    <lineage>
        <taxon>Bacteria</taxon>
        <taxon>Pseudomonadati</taxon>
        <taxon>Pseudomonadota</taxon>
        <taxon>Alphaproteobacteria</taxon>
        <taxon>Hyphomicrobiales</taxon>
        <taxon>Rhizobiaceae</taxon>
        <taxon>Sinorhizobium/Ensifer group</taxon>
        <taxon>Sinorhizobium</taxon>
    </lineage>
</organism>
<sequence>MNETDMKLVVVGAAGRMGQTLIRIIHETAGVRLHAAIERTGSPFIGRDAGELAGAGPMGVAVTDKPLEAFVEAEGVLDFTAPAATVEFAGLAAQARIVHVVGTTGCSADDEARIRAAARHARVIKSGNMSLGVNLLGVLTEKAARALPAGGWDIEILEMHHKHKVDAPSGTALLLGEAAARGRGIDLADHSVRVRDGHTGARPEGSIGFATLRGGSVIGEHSVVIAGEGEMVTLSHSATDRSIFARGAVAAALWGRSRKPGFYSMLDVLGLD</sequence>
<proteinExistence type="inferred from homology"/>